<evidence type="ECO:0000250" key="1"/>
<evidence type="ECO:0000305" key="2"/>
<geneLocation type="plasmid">
    <name>megaplasmid Rsp</name>
</geneLocation>
<name>ATPE2_RALN1</name>
<comment type="function">
    <text evidence="1">Produces ATP from ADP in the presence of a proton gradient across the membrane.</text>
</comment>
<comment type="subunit">
    <text>F-type ATPases have 2 components, CF(1) - the catalytic core - and CF(0) - the membrane proton channel. CF(1) has five subunits: alpha(3), beta(3), gamma(1), delta(1), epsilon(1). CF(0) has three main subunits: a, b and c.</text>
</comment>
<comment type="subcellular location">
    <subcellularLocation>
        <location evidence="1">Cell inner membrane</location>
        <topology evidence="1">Peripheral membrane protein</topology>
    </subcellularLocation>
</comment>
<comment type="similarity">
    <text evidence="2">Belongs to the ATPase epsilon chain family.</text>
</comment>
<keyword id="KW-0066">ATP synthesis</keyword>
<keyword id="KW-0997">Cell inner membrane</keyword>
<keyword id="KW-1003">Cell membrane</keyword>
<keyword id="KW-0139">CF(1)</keyword>
<keyword id="KW-0375">Hydrogen ion transport</keyword>
<keyword id="KW-0406">Ion transport</keyword>
<keyword id="KW-0472">Membrane</keyword>
<keyword id="KW-0614">Plasmid</keyword>
<keyword id="KW-1185">Reference proteome</keyword>
<keyword id="KW-0813">Transport</keyword>
<protein>
    <recommendedName>
        <fullName>ATP synthase epsilon chain 2</fullName>
    </recommendedName>
    <alternativeName>
        <fullName>ATP synthase F1 sector epsilon subunit 2</fullName>
    </alternativeName>
    <alternativeName>
        <fullName>F-ATPase epsilon subunit 2</fullName>
    </alternativeName>
</protein>
<feature type="chain" id="PRO_0000188184" description="ATP synthase epsilon chain 2">
    <location>
        <begin position="1"/>
        <end position="139"/>
    </location>
</feature>
<sequence length="139" mass="15305">MPLLTVDVVTAEERLYQGTAKFVVVPGTEGELGILPGHEPLLTRLRPGTVRVTLENDDEVILFVAGGFAHILPQEVILLADTAVRARDLDEAKAQQARKAAEELLQNSRSKIDYARAQAELAEAVAQLAAIERARRRRR</sequence>
<organism>
    <name type="scientific">Ralstonia nicotianae (strain ATCC BAA-1114 / GMI1000)</name>
    <name type="common">Ralstonia solanacearum</name>
    <dbReference type="NCBI Taxonomy" id="267608"/>
    <lineage>
        <taxon>Bacteria</taxon>
        <taxon>Pseudomonadati</taxon>
        <taxon>Pseudomonadota</taxon>
        <taxon>Betaproteobacteria</taxon>
        <taxon>Burkholderiales</taxon>
        <taxon>Burkholderiaceae</taxon>
        <taxon>Ralstonia</taxon>
        <taxon>Ralstonia solanacearum species complex</taxon>
    </lineage>
</organism>
<reference key="1">
    <citation type="journal article" date="2002" name="Nature">
        <title>Genome sequence of the plant pathogen Ralstonia solanacearum.</title>
        <authorList>
            <person name="Salanoubat M."/>
            <person name="Genin S."/>
            <person name="Artiguenave F."/>
            <person name="Gouzy J."/>
            <person name="Mangenot S."/>
            <person name="Arlat M."/>
            <person name="Billault A."/>
            <person name="Brottier P."/>
            <person name="Camus J.-C."/>
            <person name="Cattolico L."/>
            <person name="Chandler M."/>
            <person name="Choisne N."/>
            <person name="Claudel-Renard C."/>
            <person name="Cunnac S."/>
            <person name="Demange N."/>
            <person name="Gaspin C."/>
            <person name="Lavie M."/>
            <person name="Moisan A."/>
            <person name="Robert C."/>
            <person name="Saurin W."/>
            <person name="Schiex T."/>
            <person name="Siguier P."/>
            <person name="Thebault P."/>
            <person name="Whalen M."/>
            <person name="Wincker P."/>
            <person name="Levy M."/>
            <person name="Weissenbach J."/>
            <person name="Boucher C.A."/>
        </authorList>
    </citation>
    <scope>NUCLEOTIDE SEQUENCE [LARGE SCALE GENOMIC DNA]</scope>
    <source>
        <strain>ATCC BAA-1114 / GMI1000</strain>
    </source>
</reference>
<proteinExistence type="inferred from homology"/>
<accession>Q8XRM1</accession>
<dbReference type="EMBL" id="AL646053">
    <property type="protein sequence ID" value="CAD17961.1"/>
    <property type="molecule type" value="Genomic_DNA"/>
</dbReference>
<dbReference type="RefSeq" id="WP_011004108.1">
    <property type="nucleotide sequence ID" value="NC_003296.1"/>
</dbReference>
<dbReference type="SMR" id="Q8XRM1"/>
<dbReference type="STRING" id="267608.RSp0810"/>
<dbReference type="EnsemblBacteria" id="CAD17961">
    <property type="protein sequence ID" value="CAD17961"/>
    <property type="gene ID" value="RSp0810"/>
</dbReference>
<dbReference type="KEGG" id="rso:RSp0810"/>
<dbReference type="eggNOG" id="COG0355">
    <property type="taxonomic scope" value="Bacteria"/>
</dbReference>
<dbReference type="HOGENOM" id="CLU_084338_2_0_4"/>
<dbReference type="Proteomes" id="UP000001436">
    <property type="component" value="Plasmid megaplasmid Rsp"/>
</dbReference>
<dbReference type="GO" id="GO:0005886">
    <property type="term" value="C:plasma membrane"/>
    <property type="evidence" value="ECO:0007669"/>
    <property type="project" value="UniProtKB-SubCell"/>
</dbReference>
<dbReference type="GO" id="GO:0045259">
    <property type="term" value="C:proton-transporting ATP synthase complex"/>
    <property type="evidence" value="ECO:0007669"/>
    <property type="project" value="UniProtKB-KW"/>
</dbReference>
<dbReference type="GO" id="GO:0005524">
    <property type="term" value="F:ATP binding"/>
    <property type="evidence" value="ECO:0007669"/>
    <property type="project" value="UniProtKB-UniRule"/>
</dbReference>
<dbReference type="GO" id="GO:0046933">
    <property type="term" value="F:proton-transporting ATP synthase activity, rotational mechanism"/>
    <property type="evidence" value="ECO:0007669"/>
    <property type="project" value="UniProtKB-UniRule"/>
</dbReference>
<dbReference type="CDD" id="cd12152">
    <property type="entry name" value="F1-ATPase_delta"/>
    <property type="match status" value="1"/>
</dbReference>
<dbReference type="Gene3D" id="1.20.5.440">
    <property type="entry name" value="ATP synthase delta/epsilon subunit, C-terminal domain"/>
    <property type="match status" value="1"/>
</dbReference>
<dbReference type="Gene3D" id="2.60.15.10">
    <property type="entry name" value="F0F1 ATP synthase delta/epsilon subunit, N-terminal"/>
    <property type="match status" value="1"/>
</dbReference>
<dbReference type="HAMAP" id="MF_00530">
    <property type="entry name" value="ATP_synth_epsil_bac"/>
    <property type="match status" value="1"/>
</dbReference>
<dbReference type="InterPro" id="IPR036794">
    <property type="entry name" value="ATP_F1_dsu/esu_C_sf"/>
</dbReference>
<dbReference type="InterPro" id="IPR001469">
    <property type="entry name" value="ATP_synth_F1_dsu/esu"/>
</dbReference>
<dbReference type="InterPro" id="IPR020546">
    <property type="entry name" value="ATP_synth_F1_dsu/esu_N"/>
</dbReference>
<dbReference type="InterPro" id="IPR020547">
    <property type="entry name" value="ATP_synth_F1_esu_C"/>
</dbReference>
<dbReference type="InterPro" id="IPR036771">
    <property type="entry name" value="ATPsynth_dsu/esu_N"/>
</dbReference>
<dbReference type="NCBIfam" id="TIGR01216">
    <property type="entry name" value="ATP_synt_epsi"/>
    <property type="match status" value="1"/>
</dbReference>
<dbReference type="NCBIfam" id="NF001847">
    <property type="entry name" value="PRK00571.1-4"/>
    <property type="match status" value="1"/>
</dbReference>
<dbReference type="NCBIfam" id="NF009977">
    <property type="entry name" value="PRK13442.1"/>
    <property type="match status" value="1"/>
</dbReference>
<dbReference type="PANTHER" id="PTHR13822">
    <property type="entry name" value="ATP SYNTHASE DELTA/EPSILON CHAIN"/>
    <property type="match status" value="1"/>
</dbReference>
<dbReference type="PANTHER" id="PTHR13822:SF10">
    <property type="entry name" value="ATP SYNTHASE EPSILON CHAIN, CHLOROPLASTIC"/>
    <property type="match status" value="1"/>
</dbReference>
<dbReference type="Pfam" id="PF00401">
    <property type="entry name" value="ATP-synt_DE"/>
    <property type="match status" value="1"/>
</dbReference>
<dbReference type="Pfam" id="PF02823">
    <property type="entry name" value="ATP-synt_DE_N"/>
    <property type="match status" value="1"/>
</dbReference>
<dbReference type="SUPFAM" id="SSF46604">
    <property type="entry name" value="Epsilon subunit of F1F0-ATP synthase C-terminal domain"/>
    <property type="match status" value="1"/>
</dbReference>
<dbReference type="SUPFAM" id="SSF51344">
    <property type="entry name" value="Epsilon subunit of F1F0-ATP synthase N-terminal domain"/>
    <property type="match status" value="1"/>
</dbReference>
<gene>
    <name type="primary">atpC2</name>
    <name type="ordered locus">RSp0810</name>
    <name type="ORF">RS01897</name>
</gene>